<evidence type="ECO:0000255" key="1">
    <source>
        <dbReference type="HAMAP-Rule" id="MF_00033"/>
    </source>
</evidence>
<dbReference type="EC" id="2.4.1.227" evidence="1"/>
<dbReference type="EMBL" id="CP000474">
    <property type="protein sequence ID" value="ABM09281.1"/>
    <property type="molecule type" value="Genomic_DNA"/>
</dbReference>
<dbReference type="RefSeq" id="WP_011774416.1">
    <property type="nucleotide sequence ID" value="NC_008711.1"/>
</dbReference>
<dbReference type="SMR" id="A1R5F8"/>
<dbReference type="STRING" id="290340.AAur_1710"/>
<dbReference type="CAZy" id="GT28">
    <property type="family name" value="Glycosyltransferase Family 28"/>
</dbReference>
<dbReference type="KEGG" id="aau:AAur_1710"/>
<dbReference type="eggNOG" id="COG0707">
    <property type="taxonomic scope" value="Bacteria"/>
</dbReference>
<dbReference type="HOGENOM" id="CLU_037404_1_0_11"/>
<dbReference type="OrthoDB" id="9808936at2"/>
<dbReference type="UniPathway" id="UPA00219"/>
<dbReference type="Proteomes" id="UP000000637">
    <property type="component" value="Chromosome"/>
</dbReference>
<dbReference type="GO" id="GO:0005886">
    <property type="term" value="C:plasma membrane"/>
    <property type="evidence" value="ECO:0007669"/>
    <property type="project" value="UniProtKB-SubCell"/>
</dbReference>
<dbReference type="GO" id="GO:0051991">
    <property type="term" value="F:UDP-N-acetyl-D-glucosamine:N-acetylmuramoyl-L-alanyl-D-glutamyl-meso-2,6-diaminopimelyl-D-alanyl-D-alanine-diphosphoundecaprenol 4-beta-N-acetylglucosaminlytransferase activity"/>
    <property type="evidence" value="ECO:0007669"/>
    <property type="project" value="RHEA"/>
</dbReference>
<dbReference type="GO" id="GO:0050511">
    <property type="term" value="F:undecaprenyldiphospho-muramoylpentapeptide beta-N-acetylglucosaminyltransferase activity"/>
    <property type="evidence" value="ECO:0007669"/>
    <property type="project" value="UniProtKB-UniRule"/>
</dbReference>
<dbReference type="GO" id="GO:0005975">
    <property type="term" value="P:carbohydrate metabolic process"/>
    <property type="evidence" value="ECO:0007669"/>
    <property type="project" value="InterPro"/>
</dbReference>
<dbReference type="GO" id="GO:0051301">
    <property type="term" value="P:cell division"/>
    <property type="evidence" value="ECO:0007669"/>
    <property type="project" value="UniProtKB-KW"/>
</dbReference>
<dbReference type="GO" id="GO:0071555">
    <property type="term" value="P:cell wall organization"/>
    <property type="evidence" value="ECO:0007669"/>
    <property type="project" value="UniProtKB-KW"/>
</dbReference>
<dbReference type="GO" id="GO:0030259">
    <property type="term" value="P:lipid glycosylation"/>
    <property type="evidence" value="ECO:0007669"/>
    <property type="project" value="UniProtKB-UniRule"/>
</dbReference>
<dbReference type="GO" id="GO:0009252">
    <property type="term" value="P:peptidoglycan biosynthetic process"/>
    <property type="evidence" value="ECO:0007669"/>
    <property type="project" value="UniProtKB-UniRule"/>
</dbReference>
<dbReference type="GO" id="GO:0008360">
    <property type="term" value="P:regulation of cell shape"/>
    <property type="evidence" value="ECO:0007669"/>
    <property type="project" value="UniProtKB-KW"/>
</dbReference>
<dbReference type="CDD" id="cd03785">
    <property type="entry name" value="GT28_MurG"/>
    <property type="match status" value="1"/>
</dbReference>
<dbReference type="Gene3D" id="3.40.50.2000">
    <property type="entry name" value="Glycogen Phosphorylase B"/>
    <property type="match status" value="2"/>
</dbReference>
<dbReference type="HAMAP" id="MF_00033">
    <property type="entry name" value="MurG"/>
    <property type="match status" value="1"/>
</dbReference>
<dbReference type="InterPro" id="IPR006009">
    <property type="entry name" value="GlcNAc_MurG"/>
</dbReference>
<dbReference type="InterPro" id="IPR007235">
    <property type="entry name" value="Glyco_trans_28_C"/>
</dbReference>
<dbReference type="InterPro" id="IPR004276">
    <property type="entry name" value="GlycoTrans_28_N"/>
</dbReference>
<dbReference type="NCBIfam" id="TIGR01133">
    <property type="entry name" value="murG"/>
    <property type="match status" value="1"/>
</dbReference>
<dbReference type="PANTHER" id="PTHR21015:SF22">
    <property type="entry name" value="GLYCOSYLTRANSFERASE"/>
    <property type="match status" value="1"/>
</dbReference>
<dbReference type="PANTHER" id="PTHR21015">
    <property type="entry name" value="UDP-N-ACETYLGLUCOSAMINE--N-ACETYLMURAMYL-(PENTAPEPTIDE) PYROPHOSPHORYL-UNDECAPRENOL N-ACETYLGLUCOSAMINE TRANSFERASE 1"/>
    <property type="match status" value="1"/>
</dbReference>
<dbReference type="Pfam" id="PF04101">
    <property type="entry name" value="Glyco_tran_28_C"/>
    <property type="match status" value="1"/>
</dbReference>
<dbReference type="Pfam" id="PF03033">
    <property type="entry name" value="Glyco_transf_28"/>
    <property type="match status" value="1"/>
</dbReference>
<dbReference type="SUPFAM" id="SSF53756">
    <property type="entry name" value="UDP-Glycosyltransferase/glycogen phosphorylase"/>
    <property type="match status" value="1"/>
</dbReference>
<keyword id="KW-0131">Cell cycle</keyword>
<keyword id="KW-0132">Cell division</keyword>
<keyword id="KW-1003">Cell membrane</keyword>
<keyword id="KW-0133">Cell shape</keyword>
<keyword id="KW-0961">Cell wall biogenesis/degradation</keyword>
<keyword id="KW-0328">Glycosyltransferase</keyword>
<keyword id="KW-0472">Membrane</keyword>
<keyword id="KW-0573">Peptidoglycan synthesis</keyword>
<keyword id="KW-0808">Transferase</keyword>
<proteinExistence type="inferred from homology"/>
<feature type="chain" id="PRO_0000315064" description="UDP-N-acetylglucosamine--N-acetylmuramyl-(pentapeptide) pyrophosphoryl-undecaprenol N-acetylglucosamine transferase">
    <location>
        <begin position="1"/>
        <end position="372"/>
    </location>
</feature>
<feature type="binding site" evidence="1">
    <location>
        <begin position="21"/>
        <end position="23"/>
    </location>
    <ligand>
        <name>UDP-N-acetyl-alpha-D-glucosamine</name>
        <dbReference type="ChEBI" id="CHEBI:57705"/>
    </ligand>
</feature>
<feature type="binding site" evidence="1">
    <location>
        <position position="135"/>
    </location>
    <ligand>
        <name>UDP-N-acetyl-alpha-D-glucosamine</name>
        <dbReference type="ChEBI" id="CHEBI:57705"/>
    </ligand>
</feature>
<feature type="binding site" evidence="1">
    <location>
        <position position="172"/>
    </location>
    <ligand>
        <name>UDP-N-acetyl-alpha-D-glucosamine</name>
        <dbReference type="ChEBI" id="CHEBI:57705"/>
    </ligand>
</feature>
<feature type="binding site" evidence="1">
    <location>
        <position position="206"/>
    </location>
    <ligand>
        <name>UDP-N-acetyl-alpha-D-glucosamine</name>
        <dbReference type="ChEBI" id="CHEBI:57705"/>
    </ligand>
</feature>
<feature type="binding site" evidence="1">
    <location>
        <position position="303"/>
    </location>
    <ligand>
        <name>UDP-N-acetyl-alpha-D-glucosamine</name>
        <dbReference type="ChEBI" id="CHEBI:57705"/>
    </ligand>
</feature>
<protein>
    <recommendedName>
        <fullName evidence="1">UDP-N-acetylglucosamine--N-acetylmuramyl-(pentapeptide) pyrophosphoryl-undecaprenol N-acetylglucosamine transferase</fullName>
        <ecNumber evidence="1">2.4.1.227</ecNumber>
    </recommendedName>
    <alternativeName>
        <fullName evidence="1">Undecaprenyl-PP-MurNAc-pentapeptide-UDPGlcNAc GlcNAc transferase</fullName>
    </alternativeName>
</protein>
<comment type="function">
    <text evidence="1">Cell wall formation. Catalyzes the transfer of a GlcNAc subunit on undecaprenyl-pyrophosphoryl-MurNAc-pentapeptide (lipid intermediate I) to form undecaprenyl-pyrophosphoryl-MurNAc-(pentapeptide)GlcNAc (lipid intermediate II).</text>
</comment>
<comment type="catalytic activity">
    <reaction evidence="1">
        <text>di-trans,octa-cis-undecaprenyl diphospho-N-acetyl-alpha-D-muramoyl-L-alanyl-D-glutamyl-meso-2,6-diaminopimeloyl-D-alanyl-D-alanine + UDP-N-acetyl-alpha-D-glucosamine = di-trans,octa-cis-undecaprenyl diphospho-[N-acetyl-alpha-D-glucosaminyl-(1-&gt;4)]-N-acetyl-alpha-D-muramoyl-L-alanyl-D-glutamyl-meso-2,6-diaminopimeloyl-D-alanyl-D-alanine + UDP + H(+)</text>
        <dbReference type="Rhea" id="RHEA:31227"/>
        <dbReference type="ChEBI" id="CHEBI:15378"/>
        <dbReference type="ChEBI" id="CHEBI:57705"/>
        <dbReference type="ChEBI" id="CHEBI:58223"/>
        <dbReference type="ChEBI" id="CHEBI:61387"/>
        <dbReference type="ChEBI" id="CHEBI:61388"/>
        <dbReference type="EC" id="2.4.1.227"/>
    </reaction>
</comment>
<comment type="pathway">
    <text evidence="1">Cell wall biogenesis; peptidoglycan biosynthesis.</text>
</comment>
<comment type="subcellular location">
    <subcellularLocation>
        <location evidence="1">Cell membrane</location>
        <topology evidence="1">Peripheral membrane protein</topology>
        <orientation evidence="1">Cytoplasmic side</orientation>
    </subcellularLocation>
</comment>
<comment type="similarity">
    <text evidence="1">Belongs to the glycosyltransferase 28 family. MurG subfamily.</text>
</comment>
<organism>
    <name type="scientific">Paenarthrobacter aurescens (strain TC1)</name>
    <dbReference type="NCBI Taxonomy" id="290340"/>
    <lineage>
        <taxon>Bacteria</taxon>
        <taxon>Bacillati</taxon>
        <taxon>Actinomycetota</taxon>
        <taxon>Actinomycetes</taxon>
        <taxon>Micrococcales</taxon>
        <taxon>Micrococcaceae</taxon>
        <taxon>Paenarthrobacter</taxon>
    </lineage>
</organism>
<sequence length="372" mass="38405">MTFDSANASKPLSVVLAGGGTAGHVSPLLAIADAIREKRPEAAILAVGTPSGMETRLVPAAGYELATIDRVPFPRRPSADLVKLPARLSGAVRQARRILEEARADVLVGVGGYVCTPMYLAARKLRIPIVIHEANMKAGLANRVGARFSNHVAVAFAGTRLRGARHVGMPMRRAISGLDRAVAAPAARAALGLDAQRPALIVTGGSSGALSINRAITAALPALAAAGVQTLHITGNGKAVKDDDGGLLTADGYRQVEYVDGMENVYAAADVLLARAGAGTVSEVAAVGVPAVFVPLPIGNGEQALNAAPLVAAGGAVMVDDKDLSPEWLRSELIPLLTDRSRLNEMARKSEALGIRNADQRMADLVLEAVSA</sequence>
<accession>A1R5F8</accession>
<reference key="1">
    <citation type="journal article" date="2006" name="PLoS Genet.">
        <title>Secrets of soil survival revealed by the genome sequence of Arthrobacter aurescens TC1.</title>
        <authorList>
            <person name="Mongodin E.F."/>
            <person name="Shapir N."/>
            <person name="Daugherty S.C."/>
            <person name="DeBoy R.T."/>
            <person name="Emerson J.B."/>
            <person name="Shvartzbeyn A."/>
            <person name="Radune D."/>
            <person name="Vamathevan J."/>
            <person name="Riggs F."/>
            <person name="Grinberg V."/>
            <person name="Khouri H.M."/>
            <person name="Wackett L.P."/>
            <person name="Nelson K.E."/>
            <person name="Sadowsky M.J."/>
        </authorList>
    </citation>
    <scope>NUCLEOTIDE SEQUENCE [LARGE SCALE GENOMIC DNA]</scope>
    <source>
        <strain>TC1</strain>
    </source>
</reference>
<name>MURG_PAEAT</name>
<gene>
    <name evidence="1" type="primary">murG</name>
    <name type="ordered locus">AAur_1710</name>
</gene>